<dbReference type="EC" id="2.7.6.1" evidence="1"/>
<dbReference type="EMBL" id="AE007869">
    <property type="protein sequence ID" value="AAK87960.2"/>
    <property type="molecule type" value="Genomic_DNA"/>
</dbReference>
<dbReference type="PIR" id="AI2848">
    <property type="entry name" value="AI2848"/>
</dbReference>
<dbReference type="PIR" id="G97625">
    <property type="entry name" value="G97625"/>
</dbReference>
<dbReference type="RefSeq" id="NP_355175.2">
    <property type="nucleotide sequence ID" value="NC_003062.2"/>
</dbReference>
<dbReference type="RefSeq" id="WP_010972147.1">
    <property type="nucleotide sequence ID" value="NC_003062.2"/>
</dbReference>
<dbReference type="SMR" id="Q8UDA9"/>
<dbReference type="STRING" id="176299.Atu2218"/>
<dbReference type="EnsemblBacteria" id="AAK87960">
    <property type="protein sequence ID" value="AAK87960"/>
    <property type="gene ID" value="Atu2218"/>
</dbReference>
<dbReference type="GeneID" id="79862031"/>
<dbReference type="KEGG" id="atu:Atu2218"/>
<dbReference type="PATRIC" id="fig|176299.10.peg.2227"/>
<dbReference type="eggNOG" id="COG0462">
    <property type="taxonomic scope" value="Bacteria"/>
</dbReference>
<dbReference type="HOGENOM" id="CLU_033546_2_0_5"/>
<dbReference type="OrthoDB" id="9777067at2"/>
<dbReference type="PhylomeDB" id="Q8UDA9"/>
<dbReference type="BioCyc" id="AGRO:ATU2218-MONOMER"/>
<dbReference type="UniPathway" id="UPA00087">
    <property type="reaction ID" value="UER00172"/>
</dbReference>
<dbReference type="Proteomes" id="UP000000813">
    <property type="component" value="Chromosome circular"/>
</dbReference>
<dbReference type="GO" id="GO:0005737">
    <property type="term" value="C:cytoplasm"/>
    <property type="evidence" value="ECO:0007669"/>
    <property type="project" value="UniProtKB-SubCell"/>
</dbReference>
<dbReference type="GO" id="GO:0002189">
    <property type="term" value="C:ribose phosphate diphosphokinase complex"/>
    <property type="evidence" value="ECO:0007669"/>
    <property type="project" value="TreeGrafter"/>
</dbReference>
<dbReference type="GO" id="GO:0005524">
    <property type="term" value="F:ATP binding"/>
    <property type="evidence" value="ECO:0007669"/>
    <property type="project" value="UniProtKB-KW"/>
</dbReference>
<dbReference type="GO" id="GO:0016301">
    <property type="term" value="F:kinase activity"/>
    <property type="evidence" value="ECO:0007669"/>
    <property type="project" value="UniProtKB-KW"/>
</dbReference>
<dbReference type="GO" id="GO:0000287">
    <property type="term" value="F:magnesium ion binding"/>
    <property type="evidence" value="ECO:0007669"/>
    <property type="project" value="UniProtKB-UniRule"/>
</dbReference>
<dbReference type="GO" id="GO:0004749">
    <property type="term" value="F:ribose phosphate diphosphokinase activity"/>
    <property type="evidence" value="ECO:0007669"/>
    <property type="project" value="UniProtKB-UniRule"/>
</dbReference>
<dbReference type="GO" id="GO:0006015">
    <property type="term" value="P:5-phosphoribose 1-diphosphate biosynthetic process"/>
    <property type="evidence" value="ECO:0007669"/>
    <property type="project" value="UniProtKB-UniRule"/>
</dbReference>
<dbReference type="GO" id="GO:0006164">
    <property type="term" value="P:purine nucleotide biosynthetic process"/>
    <property type="evidence" value="ECO:0007669"/>
    <property type="project" value="TreeGrafter"/>
</dbReference>
<dbReference type="GO" id="GO:0009156">
    <property type="term" value="P:ribonucleoside monophosphate biosynthetic process"/>
    <property type="evidence" value="ECO:0007669"/>
    <property type="project" value="InterPro"/>
</dbReference>
<dbReference type="CDD" id="cd06223">
    <property type="entry name" value="PRTases_typeI"/>
    <property type="match status" value="1"/>
</dbReference>
<dbReference type="FunFam" id="3.40.50.2020:FF:000001">
    <property type="entry name" value="Ribose-phosphate pyrophosphokinase"/>
    <property type="match status" value="1"/>
</dbReference>
<dbReference type="Gene3D" id="3.40.50.2020">
    <property type="match status" value="2"/>
</dbReference>
<dbReference type="HAMAP" id="MF_00583_B">
    <property type="entry name" value="RibP_PPkinase_B"/>
    <property type="match status" value="1"/>
</dbReference>
<dbReference type="InterPro" id="IPR000842">
    <property type="entry name" value="PRib_PP_synth_CS"/>
</dbReference>
<dbReference type="InterPro" id="IPR029099">
    <property type="entry name" value="Pribosyltran_N"/>
</dbReference>
<dbReference type="InterPro" id="IPR000836">
    <property type="entry name" value="PRibTrfase_dom"/>
</dbReference>
<dbReference type="InterPro" id="IPR029057">
    <property type="entry name" value="PRTase-like"/>
</dbReference>
<dbReference type="InterPro" id="IPR005946">
    <property type="entry name" value="Rib-P_diPkinase"/>
</dbReference>
<dbReference type="InterPro" id="IPR037515">
    <property type="entry name" value="Rib-P_diPkinase_bac"/>
</dbReference>
<dbReference type="NCBIfam" id="NF002320">
    <property type="entry name" value="PRK01259.1"/>
    <property type="match status" value="1"/>
</dbReference>
<dbReference type="NCBIfam" id="TIGR01251">
    <property type="entry name" value="ribP_PPkin"/>
    <property type="match status" value="1"/>
</dbReference>
<dbReference type="PANTHER" id="PTHR10210">
    <property type="entry name" value="RIBOSE-PHOSPHATE DIPHOSPHOKINASE FAMILY MEMBER"/>
    <property type="match status" value="1"/>
</dbReference>
<dbReference type="PANTHER" id="PTHR10210:SF41">
    <property type="entry name" value="RIBOSE-PHOSPHATE PYROPHOSPHOKINASE 1, CHLOROPLASTIC"/>
    <property type="match status" value="1"/>
</dbReference>
<dbReference type="Pfam" id="PF00156">
    <property type="entry name" value="Pribosyltran"/>
    <property type="match status" value="1"/>
</dbReference>
<dbReference type="Pfam" id="PF13793">
    <property type="entry name" value="Pribosyltran_N"/>
    <property type="match status" value="1"/>
</dbReference>
<dbReference type="SMART" id="SM01400">
    <property type="entry name" value="Pribosyltran_N"/>
    <property type="match status" value="1"/>
</dbReference>
<dbReference type="SUPFAM" id="SSF53271">
    <property type="entry name" value="PRTase-like"/>
    <property type="match status" value="1"/>
</dbReference>
<dbReference type="PROSITE" id="PS00114">
    <property type="entry name" value="PRPP_SYNTHASE"/>
    <property type="match status" value="1"/>
</dbReference>
<feature type="chain" id="PRO_0000141103" description="Ribose-phosphate pyrophosphokinase">
    <location>
        <begin position="1"/>
        <end position="310"/>
    </location>
</feature>
<feature type="active site" evidence="1">
    <location>
        <position position="190"/>
    </location>
</feature>
<feature type="binding site" evidence="1">
    <location>
        <begin position="34"/>
        <end position="36"/>
    </location>
    <ligand>
        <name>ATP</name>
        <dbReference type="ChEBI" id="CHEBI:30616"/>
    </ligand>
</feature>
<feature type="binding site" evidence="1">
    <location>
        <begin position="93"/>
        <end position="94"/>
    </location>
    <ligand>
        <name>ATP</name>
        <dbReference type="ChEBI" id="CHEBI:30616"/>
    </ligand>
</feature>
<feature type="binding site" evidence="1">
    <location>
        <position position="127"/>
    </location>
    <ligand>
        <name>Mg(2+)</name>
        <dbReference type="ChEBI" id="CHEBI:18420"/>
        <label>1</label>
    </ligand>
</feature>
<feature type="binding site" evidence="1">
    <location>
        <position position="167"/>
    </location>
    <ligand>
        <name>Mg(2+)</name>
        <dbReference type="ChEBI" id="CHEBI:18420"/>
        <label>2</label>
    </ligand>
</feature>
<feature type="binding site" evidence="1">
    <location>
        <position position="192"/>
    </location>
    <ligand>
        <name>D-ribose 5-phosphate</name>
        <dbReference type="ChEBI" id="CHEBI:78346"/>
    </ligand>
</feature>
<feature type="binding site" evidence="1">
    <location>
        <position position="216"/>
    </location>
    <ligand>
        <name>D-ribose 5-phosphate</name>
        <dbReference type="ChEBI" id="CHEBI:78346"/>
    </ligand>
</feature>
<feature type="binding site" evidence="1">
    <location>
        <begin position="220"/>
        <end position="224"/>
    </location>
    <ligand>
        <name>D-ribose 5-phosphate</name>
        <dbReference type="ChEBI" id="CHEBI:78346"/>
    </ligand>
</feature>
<name>KPRS_AGRFC</name>
<comment type="function">
    <text evidence="1">Involved in the biosynthesis of the central metabolite phospho-alpha-D-ribosyl-1-pyrophosphate (PRPP) via the transfer of pyrophosphoryl group from ATP to 1-hydroxyl of ribose-5-phosphate (Rib-5-P).</text>
</comment>
<comment type="catalytic activity">
    <reaction evidence="1">
        <text>D-ribose 5-phosphate + ATP = 5-phospho-alpha-D-ribose 1-diphosphate + AMP + H(+)</text>
        <dbReference type="Rhea" id="RHEA:15609"/>
        <dbReference type="ChEBI" id="CHEBI:15378"/>
        <dbReference type="ChEBI" id="CHEBI:30616"/>
        <dbReference type="ChEBI" id="CHEBI:58017"/>
        <dbReference type="ChEBI" id="CHEBI:78346"/>
        <dbReference type="ChEBI" id="CHEBI:456215"/>
        <dbReference type="EC" id="2.7.6.1"/>
    </reaction>
</comment>
<comment type="cofactor">
    <cofactor evidence="1">
        <name>Mg(2+)</name>
        <dbReference type="ChEBI" id="CHEBI:18420"/>
    </cofactor>
    <text evidence="1">Binds 2 Mg(2+) ions per subunit.</text>
</comment>
<comment type="pathway">
    <text evidence="1">Metabolic intermediate biosynthesis; 5-phospho-alpha-D-ribose 1-diphosphate biosynthesis; 5-phospho-alpha-D-ribose 1-diphosphate from D-ribose 5-phosphate (route I): step 1/1.</text>
</comment>
<comment type="subunit">
    <text evidence="1">Homohexamer.</text>
</comment>
<comment type="subcellular location">
    <subcellularLocation>
        <location evidence="1">Cytoplasm</location>
    </subcellularLocation>
</comment>
<comment type="similarity">
    <text evidence="1">Belongs to the ribose-phosphate pyrophosphokinase family. Class I subfamily.</text>
</comment>
<protein>
    <recommendedName>
        <fullName evidence="1">Ribose-phosphate pyrophosphokinase</fullName>
        <shortName evidence="1">RPPK</shortName>
        <ecNumber evidence="1">2.7.6.1</ecNumber>
    </recommendedName>
    <alternativeName>
        <fullName evidence="1">5-phospho-D-ribosyl alpha-1-diphosphate synthase</fullName>
    </alternativeName>
    <alternativeName>
        <fullName evidence="1">Phosphoribosyl diphosphate synthase</fullName>
    </alternativeName>
    <alternativeName>
        <fullName evidence="1">Phosphoribosyl pyrophosphate synthase</fullName>
        <shortName evidence="1">P-Rib-PP synthase</shortName>
        <shortName evidence="1">PRPP synthase</shortName>
        <shortName evidence="1">PRPPase</shortName>
    </alternativeName>
</protein>
<keyword id="KW-0067">ATP-binding</keyword>
<keyword id="KW-0963">Cytoplasm</keyword>
<keyword id="KW-0418">Kinase</keyword>
<keyword id="KW-0460">Magnesium</keyword>
<keyword id="KW-0479">Metal-binding</keyword>
<keyword id="KW-0545">Nucleotide biosynthesis</keyword>
<keyword id="KW-0547">Nucleotide-binding</keyword>
<keyword id="KW-1185">Reference proteome</keyword>
<keyword id="KW-0808">Transferase</keyword>
<accession>Q8UDA9</accession>
<evidence type="ECO:0000255" key="1">
    <source>
        <dbReference type="HAMAP-Rule" id="MF_00583"/>
    </source>
</evidence>
<gene>
    <name evidence="1" type="primary">prs</name>
    <name type="synonym">prsA</name>
    <name type="ordered locus">Atu2218</name>
    <name type="ORF">AGR_C_4031</name>
</gene>
<reference key="1">
    <citation type="journal article" date="2001" name="Science">
        <title>The genome of the natural genetic engineer Agrobacterium tumefaciens C58.</title>
        <authorList>
            <person name="Wood D.W."/>
            <person name="Setubal J.C."/>
            <person name="Kaul R."/>
            <person name="Monks D.E."/>
            <person name="Kitajima J.P."/>
            <person name="Okura V.K."/>
            <person name="Zhou Y."/>
            <person name="Chen L."/>
            <person name="Wood G.E."/>
            <person name="Almeida N.F. Jr."/>
            <person name="Woo L."/>
            <person name="Chen Y."/>
            <person name="Paulsen I.T."/>
            <person name="Eisen J.A."/>
            <person name="Karp P.D."/>
            <person name="Bovee D. Sr."/>
            <person name="Chapman P."/>
            <person name="Clendenning J."/>
            <person name="Deatherage G."/>
            <person name="Gillet W."/>
            <person name="Grant C."/>
            <person name="Kutyavin T."/>
            <person name="Levy R."/>
            <person name="Li M.-J."/>
            <person name="McClelland E."/>
            <person name="Palmieri A."/>
            <person name="Raymond C."/>
            <person name="Rouse G."/>
            <person name="Saenphimmachak C."/>
            <person name="Wu Z."/>
            <person name="Romero P."/>
            <person name="Gordon D."/>
            <person name="Zhang S."/>
            <person name="Yoo H."/>
            <person name="Tao Y."/>
            <person name="Biddle P."/>
            <person name="Jung M."/>
            <person name="Krespan W."/>
            <person name="Perry M."/>
            <person name="Gordon-Kamm B."/>
            <person name="Liao L."/>
            <person name="Kim S."/>
            <person name="Hendrick C."/>
            <person name="Zhao Z.-Y."/>
            <person name="Dolan M."/>
            <person name="Chumley F."/>
            <person name="Tingey S.V."/>
            <person name="Tomb J.-F."/>
            <person name="Gordon M.P."/>
            <person name="Olson M.V."/>
            <person name="Nester E.W."/>
        </authorList>
    </citation>
    <scope>NUCLEOTIDE SEQUENCE [LARGE SCALE GENOMIC DNA]</scope>
    <source>
        <strain>C58 / ATCC 33970</strain>
    </source>
</reference>
<reference key="2">
    <citation type="journal article" date="2001" name="Science">
        <title>Genome sequence of the plant pathogen and biotechnology agent Agrobacterium tumefaciens C58.</title>
        <authorList>
            <person name="Goodner B."/>
            <person name="Hinkle G."/>
            <person name="Gattung S."/>
            <person name="Miller N."/>
            <person name="Blanchard M."/>
            <person name="Qurollo B."/>
            <person name="Goldman B.S."/>
            <person name="Cao Y."/>
            <person name="Askenazi M."/>
            <person name="Halling C."/>
            <person name="Mullin L."/>
            <person name="Houmiel K."/>
            <person name="Gordon J."/>
            <person name="Vaudin M."/>
            <person name="Iartchouk O."/>
            <person name="Epp A."/>
            <person name="Liu F."/>
            <person name="Wollam C."/>
            <person name="Allinger M."/>
            <person name="Doughty D."/>
            <person name="Scott C."/>
            <person name="Lappas C."/>
            <person name="Markelz B."/>
            <person name="Flanagan C."/>
            <person name="Crowell C."/>
            <person name="Gurson J."/>
            <person name="Lomo C."/>
            <person name="Sear C."/>
            <person name="Strub G."/>
            <person name="Cielo C."/>
            <person name="Slater S."/>
        </authorList>
    </citation>
    <scope>NUCLEOTIDE SEQUENCE [LARGE SCALE GENOMIC DNA]</scope>
    <source>
        <strain>C58 / ATCC 33970</strain>
    </source>
</reference>
<proteinExistence type="inferred from homology"/>
<organism>
    <name type="scientific">Agrobacterium fabrum (strain C58 / ATCC 33970)</name>
    <name type="common">Agrobacterium tumefaciens (strain C58)</name>
    <dbReference type="NCBI Taxonomy" id="176299"/>
    <lineage>
        <taxon>Bacteria</taxon>
        <taxon>Pseudomonadati</taxon>
        <taxon>Pseudomonadota</taxon>
        <taxon>Alphaproteobacteria</taxon>
        <taxon>Hyphomicrobiales</taxon>
        <taxon>Rhizobiaceae</taxon>
        <taxon>Rhizobium/Agrobacterium group</taxon>
        <taxon>Agrobacterium</taxon>
        <taxon>Agrobacterium tumefaciens complex</taxon>
    </lineage>
</organism>
<sequence length="310" mass="33343">MKVFAGNSNRHLAEAICKYLNVPLGNATVKRFADQEIFVEISENVRGEDVFIVQSTSFPANDHLMELLIMIDAMRRSSAKRITAVLPYFGYARQDRKAGPRTPISAKLVANLITEAGADRVLTLDLHAGQIQGFFDIPTDNLFAAPILARDVKDHYDTNNVMVVSPDVGGVVRARALSKRLDCLLAIVDKRRDRPGESEVMNVIGDVSGKDCILIDDIIDSGGTLCNAAEALLKKGATSVTAYITHGVLSGGAVARVASSKLRELVITDSIQPTTGVQSAHNIRVVSTAGLLGEAINRTAQEQSVSGLFD</sequence>